<organism>
    <name type="scientific">Thiobacillus denitrificans (strain ATCC 25259 / T1)</name>
    <dbReference type="NCBI Taxonomy" id="292415"/>
    <lineage>
        <taxon>Bacteria</taxon>
        <taxon>Pseudomonadati</taxon>
        <taxon>Pseudomonadota</taxon>
        <taxon>Betaproteobacteria</taxon>
        <taxon>Nitrosomonadales</taxon>
        <taxon>Thiobacillaceae</taxon>
        <taxon>Thiobacillus</taxon>
    </lineage>
</organism>
<feature type="chain" id="PRO_0000235043" description="Serine hydroxymethyltransferase">
    <location>
        <begin position="1"/>
        <end position="414"/>
    </location>
</feature>
<feature type="binding site" evidence="1">
    <location>
        <position position="121"/>
    </location>
    <ligand>
        <name>(6S)-5,6,7,8-tetrahydrofolate</name>
        <dbReference type="ChEBI" id="CHEBI:57453"/>
    </ligand>
</feature>
<feature type="binding site" evidence="1">
    <location>
        <begin position="125"/>
        <end position="127"/>
    </location>
    <ligand>
        <name>(6S)-5,6,7,8-tetrahydrofolate</name>
        <dbReference type="ChEBI" id="CHEBI:57453"/>
    </ligand>
</feature>
<feature type="site" description="Plays an important role in substrate specificity" evidence="1">
    <location>
        <position position="228"/>
    </location>
</feature>
<feature type="modified residue" description="N6-(pyridoxal phosphate)lysine" evidence="1">
    <location>
        <position position="229"/>
    </location>
</feature>
<dbReference type="EC" id="2.1.2.1" evidence="1"/>
<dbReference type="EMBL" id="CP000116">
    <property type="protein sequence ID" value="AAZ98118.1"/>
    <property type="molecule type" value="Genomic_DNA"/>
</dbReference>
<dbReference type="RefSeq" id="WP_011312677.1">
    <property type="nucleotide sequence ID" value="NC_007404.1"/>
</dbReference>
<dbReference type="SMR" id="Q3SGX5"/>
<dbReference type="STRING" id="292415.Tbd_2165"/>
<dbReference type="KEGG" id="tbd:Tbd_2165"/>
<dbReference type="eggNOG" id="COG0112">
    <property type="taxonomic scope" value="Bacteria"/>
</dbReference>
<dbReference type="HOGENOM" id="CLU_022477_2_1_4"/>
<dbReference type="OrthoDB" id="9803846at2"/>
<dbReference type="UniPathway" id="UPA00193"/>
<dbReference type="UniPathway" id="UPA00288">
    <property type="reaction ID" value="UER01023"/>
</dbReference>
<dbReference type="Proteomes" id="UP000008291">
    <property type="component" value="Chromosome"/>
</dbReference>
<dbReference type="GO" id="GO:0005829">
    <property type="term" value="C:cytosol"/>
    <property type="evidence" value="ECO:0007669"/>
    <property type="project" value="TreeGrafter"/>
</dbReference>
<dbReference type="GO" id="GO:0004372">
    <property type="term" value="F:glycine hydroxymethyltransferase activity"/>
    <property type="evidence" value="ECO:0007669"/>
    <property type="project" value="UniProtKB-UniRule"/>
</dbReference>
<dbReference type="GO" id="GO:0030170">
    <property type="term" value="F:pyridoxal phosphate binding"/>
    <property type="evidence" value="ECO:0007669"/>
    <property type="project" value="UniProtKB-UniRule"/>
</dbReference>
<dbReference type="GO" id="GO:0019264">
    <property type="term" value="P:glycine biosynthetic process from serine"/>
    <property type="evidence" value="ECO:0007669"/>
    <property type="project" value="UniProtKB-UniRule"/>
</dbReference>
<dbReference type="GO" id="GO:0035999">
    <property type="term" value="P:tetrahydrofolate interconversion"/>
    <property type="evidence" value="ECO:0007669"/>
    <property type="project" value="UniProtKB-UniRule"/>
</dbReference>
<dbReference type="CDD" id="cd00378">
    <property type="entry name" value="SHMT"/>
    <property type="match status" value="1"/>
</dbReference>
<dbReference type="FunFam" id="3.40.640.10:FF:000001">
    <property type="entry name" value="Serine hydroxymethyltransferase"/>
    <property type="match status" value="1"/>
</dbReference>
<dbReference type="FunFam" id="3.90.1150.10:FF:000003">
    <property type="entry name" value="Serine hydroxymethyltransferase"/>
    <property type="match status" value="1"/>
</dbReference>
<dbReference type="Gene3D" id="3.90.1150.10">
    <property type="entry name" value="Aspartate Aminotransferase, domain 1"/>
    <property type="match status" value="1"/>
</dbReference>
<dbReference type="Gene3D" id="3.40.640.10">
    <property type="entry name" value="Type I PLP-dependent aspartate aminotransferase-like (Major domain)"/>
    <property type="match status" value="1"/>
</dbReference>
<dbReference type="HAMAP" id="MF_00051">
    <property type="entry name" value="SHMT"/>
    <property type="match status" value="1"/>
</dbReference>
<dbReference type="InterPro" id="IPR015424">
    <property type="entry name" value="PyrdxlP-dep_Trfase"/>
</dbReference>
<dbReference type="InterPro" id="IPR015421">
    <property type="entry name" value="PyrdxlP-dep_Trfase_major"/>
</dbReference>
<dbReference type="InterPro" id="IPR015422">
    <property type="entry name" value="PyrdxlP-dep_Trfase_small"/>
</dbReference>
<dbReference type="InterPro" id="IPR001085">
    <property type="entry name" value="Ser_HO-MeTrfase"/>
</dbReference>
<dbReference type="InterPro" id="IPR049943">
    <property type="entry name" value="Ser_HO-MeTrfase-like"/>
</dbReference>
<dbReference type="InterPro" id="IPR019798">
    <property type="entry name" value="Ser_HO-MeTrfase_PLP_BS"/>
</dbReference>
<dbReference type="InterPro" id="IPR039429">
    <property type="entry name" value="SHMT-like_dom"/>
</dbReference>
<dbReference type="NCBIfam" id="NF000586">
    <property type="entry name" value="PRK00011.1"/>
    <property type="match status" value="1"/>
</dbReference>
<dbReference type="PANTHER" id="PTHR11680">
    <property type="entry name" value="SERINE HYDROXYMETHYLTRANSFERASE"/>
    <property type="match status" value="1"/>
</dbReference>
<dbReference type="PANTHER" id="PTHR11680:SF50">
    <property type="entry name" value="SERINE HYDROXYMETHYLTRANSFERASE"/>
    <property type="match status" value="1"/>
</dbReference>
<dbReference type="Pfam" id="PF00464">
    <property type="entry name" value="SHMT"/>
    <property type="match status" value="1"/>
</dbReference>
<dbReference type="PIRSF" id="PIRSF000412">
    <property type="entry name" value="SHMT"/>
    <property type="match status" value="1"/>
</dbReference>
<dbReference type="SUPFAM" id="SSF53383">
    <property type="entry name" value="PLP-dependent transferases"/>
    <property type="match status" value="1"/>
</dbReference>
<dbReference type="PROSITE" id="PS00096">
    <property type="entry name" value="SHMT"/>
    <property type="match status" value="1"/>
</dbReference>
<evidence type="ECO:0000255" key="1">
    <source>
        <dbReference type="HAMAP-Rule" id="MF_00051"/>
    </source>
</evidence>
<protein>
    <recommendedName>
        <fullName evidence="1">Serine hydroxymethyltransferase</fullName>
        <shortName evidence="1">SHMT</shortName>
        <shortName evidence="1">Serine methylase</shortName>
        <ecNumber evidence="1">2.1.2.1</ecNumber>
    </recommendedName>
</protein>
<sequence>MFNRQDTLAKTDPDLWAAIQQEDRRQQDHIELIASENYTSPAVMQAQGSQLTNKYAEGYPGKRYYGGCEYVDIVEQLAIDRVKALFGAEAANVQPNSGSQANQAVFMAFLKPGDTIMGMSLAEGGHLTHGMALNMSGKWFNVVAYGLNEKEEIDYEAMERLAREHKPKLIIAGASAYALRIDFERFAKIAKEIGAIFMVDMAHYAGLIAAGLYPNPVPHADVVTSTTHKTLRGPRGGIILMKAEHEKAINSAIFPGLQGGPLMHVIAGKATAFKEAATKDFKRYQEQVIDNALVMCKVLVERGLRIISGRTESHVFLVDLRAKNLTGKEAEALLGRAHITVNKNAIPNDPQKPFVTSGIRIGTPAMTTRGFTELEAEQLAHLIADVLDAPNDEAVVERVKGEVAKLTAKFPVYG</sequence>
<comment type="function">
    <text evidence="1">Catalyzes the reversible interconversion of serine and glycine with tetrahydrofolate (THF) serving as the one-carbon carrier. This reaction serves as the major source of one-carbon groups required for the biosynthesis of purines, thymidylate, methionine, and other important biomolecules. Also exhibits THF-independent aldolase activity toward beta-hydroxyamino acids, producing glycine and aldehydes, via a retro-aldol mechanism.</text>
</comment>
<comment type="catalytic activity">
    <reaction evidence="1">
        <text>(6R)-5,10-methylene-5,6,7,8-tetrahydrofolate + glycine + H2O = (6S)-5,6,7,8-tetrahydrofolate + L-serine</text>
        <dbReference type="Rhea" id="RHEA:15481"/>
        <dbReference type="ChEBI" id="CHEBI:15377"/>
        <dbReference type="ChEBI" id="CHEBI:15636"/>
        <dbReference type="ChEBI" id="CHEBI:33384"/>
        <dbReference type="ChEBI" id="CHEBI:57305"/>
        <dbReference type="ChEBI" id="CHEBI:57453"/>
        <dbReference type="EC" id="2.1.2.1"/>
    </reaction>
</comment>
<comment type="cofactor">
    <cofactor evidence="1">
        <name>pyridoxal 5'-phosphate</name>
        <dbReference type="ChEBI" id="CHEBI:597326"/>
    </cofactor>
</comment>
<comment type="pathway">
    <text evidence="1">One-carbon metabolism; tetrahydrofolate interconversion.</text>
</comment>
<comment type="pathway">
    <text evidence="1">Amino-acid biosynthesis; glycine biosynthesis; glycine from L-serine: step 1/1.</text>
</comment>
<comment type="subunit">
    <text evidence="1">Homodimer.</text>
</comment>
<comment type="subcellular location">
    <subcellularLocation>
        <location evidence="1">Cytoplasm</location>
    </subcellularLocation>
</comment>
<comment type="similarity">
    <text evidence="1">Belongs to the SHMT family.</text>
</comment>
<gene>
    <name evidence="1" type="primary">glyA</name>
    <name type="ordered locus">Tbd_2165</name>
</gene>
<name>GLYA_THIDA</name>
<proteinExistence type="inferred from homology"/>
<reference key="1">
    <citation type="journal article" date="2006" name="J. Bacteriol.">
        <title>The genome sequence of the obligately chemolithoautotrophic, facultatively anaerobic bacterium Thiobacillus denitrificans.</title>
        <authorList>
            <person name="Beller H.R."/>
            <person name="Chain P.S."/>
            <person name="Letain T.E."/>
            <person name="Chakicherla A."/>
            <person name="Larimer F.W."/>
            <person name="Richardson P.M."/>
            <person name="Coleman M.A."/>
            <person name="Wood A.P."/>
            <person name="Kelly D.P."/>
        </authorList>
    </citation>
    <scope>NUCLEOTIDE SEQUENCE [LARGE SCALE GENOMIC DNA]</scope>
    <source>
        <strain>ATCC 25259 / T1</strain>
    </source>
</reference>
<accession>Q3SGX5</accession>
<keyword id="KW-0028">Amino-acid biosynthesis</keyword>
<keyword id="KW-0963">Cytoplasm</keyword>
<keyword id="KW-0554">One-carbon metabolism</keyword>
<keyword id="KW-0663">Pyridoxal phosphate</keyword>
<keyword id="KW-1185">Reference proteome</keyword>
<keyword id="KW-0808">Transferase</keyword>